<keyword id="KW-0131">Cell cycle</keyword>
<keyword id="KW-0132">Cell division</keyword>
<keyword id="KW-0997">Cell inner membrane</keyword>
<keyword id="KW-1003">Cell membrane</keyword>
<keyword id="KW-0133">Cell shape</keyword>
<keyword id="KW-0961">Cell wall biogenesis/degradation</keyword>
<keyword id="KW-0328">Glycosyltransferase</keyword>
<keyword id="KW-0472">Membrane</keyword>
<keyword id="KW-0573">Peptidoglycan synthesis</keyword>
<keyword id="KW-0808">Transferase</keyword>
<name>MURG_VIBC1</name>
<protein>
    <recommendedName>
        <fullName evidence="1">UDP-N-acetylglucosamine--N-acetylmuramyl-(pentapeptide) pyrophosphoryl-undecaprenol N-acetylglucosamine transferase</fullName>
        <ecNumber evidence="1">2.4.1.227</ecNumber>
    </recommendedName>
    <alternativeName>
        <fullName evidence="1">Undecaprenyl-PP-MurNAc-pentapeptide-UDPGlcNAc GlcNAc transferase</fullName>
    </alternativeName>
</protein>
<proteinExistence type="inferred from homology"/>
<comment type="function">
    <text evidence="1">Cell wall formation. Catalyzes the transfer of a GlcNAc subunit on undecaprenyl-pyrophosphoryl-MurNAc-pentapeptide (lipid intermediate I) to form undecaprenyl-pyrophosphoryl-MurNAc-(pentapeptide)GlcNAc (lipid intermediate II).</text>
</comment>
<comment type="catalytic activity">
    <reaction evidence="1">
        <text>di-trans,octa-cis-undecaprenyl diphospho-N-acetyl-alpha-D-muramoyl-L-alanyl-D-glutamyl-meso-2,6-diaminopimeloyl-D-alanyl-D-alanine + UDP-N-acetyl-alpha-D-glucosamine = di-trans,octa-cis-undecaprenyl diphospho-[N-acetyl-alpha-D-glucosaminyl-(1-&gt;4)]-N-acetyl-alpha-D-muramoyl-L-alanyl-D-glutamyl-meso-2,6-diaminopimeloyl-D-alanyl-D-alanine + UDP + H(+)</text>
        <dbReference type="Rhea" id="RHEA:31227"/>
        <dbReference type="ChEBI" id="CHEBI:15378"/>
        <dbReference type="ChEBI" id="CHEBI:57705"/>
        <dbReference type="ChEBI" id="CHEBI:58223"/>
        <dbReference type="ChEBI" id="CHEBI:61387"/>
        <dbReference type="ChEBI" id="CHEBI:61388"/>
        <dbReference type="EC" id="2.4.1.227"/>
    </reaction>
</comment>
<comment type="pathway">
    <text evidence="1">Cell wall biogenesis; peptidoglycan biosynthesis.</text>
</comment>
<comment type="subcellular location">
    <subcellularLocation>
        <location evidence="1">Cell inner membrane</location>
        <topology evidence="1">Peripheral membrane protein</topology>
        <orientation evidence="1">Cytoplasmic side</orientation>
    </subcellularLocation>
</comment>
<comment type="similarity">
    <text evidence="1">Belongs to the glycosyltransferase 28 family. MurG subfamily.</text>
</comment>
<reference key="1">
    <citation type="submission" date="2007-08" db="EMBL/GenBank/DDBJ databases">
        <authorList>
            <consortium name="The Vibrio harveyi Genome Sequencing Project"/>
            <person name="Bassler B."/>
            <person name="Clifton S.W."/>
            <person name="Fulton L."/>
            <person name="Delehaunty K."/>
            <person name="Fronick C."/>
            <person name="Harrison M."/>
            <person name="Markivic C."/>
            <person name="Fulton R."/>
            <person name="Tin-Wollam A.-M."/>
            <person name="Shah N."/>
            <person name="Pepin K."/>
            <person name="Nash W."/>
            <person name="Thiruvilangam P."/>
            <person name="Bhonagiri V."/>
            <person name="Waters C."/>
            <person name="Tu K.C."/>
            <person name="Irgon J."/>
            <person name="Wilson R.K."/>
        </authorList>
    </citation>
    <scope>NUCLEOTIDE SEQUENCE [LARGE SCALE GENOMIC DNA]</scope>
    <source>
        <strain>ATCC BAA-1116 / BB120</strain>
    </source>
</reference>
<dbReference type="EC" id="2.4.1.227" evidence="1"/>
<dbReference type="EMBL" id="CP000789">
    <property type="protein sequence ID" value="ABU69901.1"/>
    <property type="molecule type" value="Genomic_DNA"/>
</dbReference>
<dbReference type="RefSeq" id="WP_012126987.1">
    <property type="nucleotide sequence ID" value="NC_009783.1"/>
</dbReference>
<dbReference type="SMR" id="A7MXR6"/>
<dbReference type="CAZy" id="GT28">
    <property type="family name" value="Glycosyltransferase Family 28"/>
</dbReference>
<dbReference type="KEGG" id="vha:VIBHAR_00902"/>
<dbReference type="PATRIC" id="fig|338187.25.peg.1716"/>
<dbReference type="UniPathway" id="UPA00219"/>
<dbReference type="Proteomes" id="UP000008152">
    <property type="component" value="Chromosome I"/>
</dbReference>
<dbReference type="GO" id="GO:0005886">
    <property type="term" value="C:plasma membrane"/>
    <property type="evidence" value="ECO:0007669"/>
    <property type="project" value="UniProtKB-SubCell"/>
</dbReference>
<dbReference type="GO" id="GO:0051991">
    <property type="term" value="F:UDP-N-acetyl-D-glucosamine:N-acetylmuramoyl-L-alanyl-D-glutamyl-meso-2,6-diaminopimelyl-D-alanyl-D-alanine-diphosphoundecaprenol 4-beta-N-acetylglucosaminlytransferase activity"/>
    <property type="evidence" value="ECO:0007669"/>
    <property type="project" value="RHEA"/>
</dbReference>
<dbReference type="GO" id="GO:0050511">
    <property type="term" value="F:undecaprenyldiphospho-muramoylpentapeptide beta-N-acetylglucosaminyltransferase activity"/>
    <property type="evidence" value="ECO:0007669"/>
    <property type="project" value="UniProtKB-UniRule"/>
</dbReference>
<dbReference type="GO" id="GO:0005975">
    <property type="term" value="P:carbohydrate metabolic process"/>
    <property type="evidence" value="ECO:0007669"/>
    <property type="project" value="InterPro"/>
</dbReference>
<dbReference type="GO" id="GO:0051301">
    <property type="term" value="P:cell division"/>
    <property type="evidence" value="ECO:0007669"/>
    <property type="project" value="UniProtKB-KW"/>
</dbReference>
<dbReference type="GO" id="GO:0071555">
    <property type="term" value="P:cell wall organization"/>
    <property type="evidence" value="ECO:0007669"/>
    <property type="project" value="UniProtKB-KW"/>
</dbReference>
<dbReference type="GO" id="GO:0030259">
    <property type="term" value="P:lipid glycosylation"/>
    <property type="evidence" value="ECO:0007669"/>
    <property type="project" value="UniProtKB-UniRule"/>
</dbReference>
<dbReference type="GO" id="GO:0009252">
    <property type="term" value="P:peptidoglycan biosynthetic process"/>
    <property type="evidence" value="ECO:0007669"/>
    <property type="project" value="UniProtKB-UniRule"/>
</dbReference>
<dbReference type="GO" id="GO:0008360">
    <property type="term" value="P:regulation of cell shape"/>
    <property type="evidence" value="ECO:0007669"/>
    <property type="project" value="UniProtKB-KW"/>
</dbReference>
<dbReference type="CDD" id="cd03785">
    <property type="entry name" value="GT28_MurG"/>
    <property type="match status" value="1"/>
</dbReference>
<dbReference type="FunFam" id="3.40.50.2000:FF:000016">
    <property type="entry name" value="UDP-N-acetylglucosamine--N-acetylmuramyl-(pentapeptide) pyrophosphoryl-undecaprenol N-acetylglucosamine transferase"/>
    <property type="match status" value="1"/>
</dbReference>
<dbReference type="Gene3D" id="3.40.50.2000">
    <property type="entry name" value="Glycogen Phosphorylase B"/>
    <property type="match status" value="2"/>
</dbReference>
<dbReference type="HAMAP" id="MF_00033">
    <property type="entry name" value="MurG"/>
    <property type="match status" value="1"/>
</dbReference>
<dbReference type="InterPro" id="IPR006009">
    <property type="entry name" value="GlcNAc_MurG"/>
</dbReference>
<dbReference type="InterPro" id="IPR007235">
    <property type="entry name" value="Glyco_trans_28_C"/>
</dbReference>
<dbReference type="InterPro" id="IPR004276">
    <property type="entry name" value="GlycoTrans_28_N"/>
</dbReference>
<dbReference type="NCBIfam" id="TIGR01133">
    <property type="entry name" value="murG"/>
    <property type="match status" value="1"/>
</dbReference>
<dbReference type="PANTHER" id="PTHR21015:SF22">
    <property type="entry name" value="GLYCOSYLTRANSFERASE"/>
    <property type="match status" value="1"/>
</dbReference>
<dbReference type="PANTHER" id="PTHR21015">
    <property type="entry name" value="UDP-N-ACETYLGLUCOSAMINE--N-ACETYLMURAMYL-(PENTAPEPTIDE) PYROPHOSPHORYL-UNDECAPRENOL N-ACETYLGLUCOSAMINE TRANSFERASE 1"/>
    <property type="match status" value="1"/>
</dbReference>
<dbReference type="Pfam" id="PF04101">
    <property type="entry name" value="Glyco_tran_28_C"/>
    <property type="match status" value="1"/>
</dbReference>
<dbReference type="Pfam" id="PF03033">
    <property type="entry name" value="Glyco_transf_28"/>
    <property type="match status" value="1"/>
</dbReference>
<dbReference type="SUPFAM" id="SSF53756">
    <property type="entry name" value="UDP-Glycosyltransferase/glycogen phosphorylase"/>
    <property type="match status" value="1"/>
</dbReference>
<evidence type="ECO:0000255" key="1">
    <source>
        <dbReference type="HAMAP-Rule" id="MF_00033"/>
    </source>
</evidence>
<organism>
    <name type="scientific">Vibrio campbellii (strain ATCC BAA-1116)</name>
    <dbReference type="NCBI Taxonomy" id="2902295"/>
    <lineage>
        <taxon>Bacteria</taxon>
        <taxon>Pseudomonadati</taxon>
        <taxon>Pseudomonadota</taxon>
        <taxon>Gammaproteobacteria</taxon>
        <taxon>Vibrionales</taxon>
        <taxon>Vibrionaceae</taxon>
        <taxon>Vibrio</taxon>
    </lineage>
</organism>
<feature type="chain" id="PRO_1000002701" description="UDP-N-acetylglucosamine--N-acetylmuramyl-(pentapeptide) pyrophosphoryl-undecaprenol N-acetylglucosamine transferase">
    <location>
        <begin position="1"/>
        <end position="355"/>
    </location>
</feature>
<feature type="binding site" evidence="1">
    <location>
        <begin position="14"/>
        <end position="16"/>
    </location>
    <ligand>
        <name>UDP-N-acetyl-alpha-D-glucosamine</name>
        <dbReference type="ChEBI" id="CHEBI:57705"/>
    </ligand>
</feature>
<feature type="binding site" evidence="1">
    <location>
        <position position="126"/>
    </location>
    <ligand>
        <name>UDP-N-acetyl-alpha-D-glucosamine</name>
        <dbReference type="ChEBI" id="CHEBI:57705"/>
    </ligand>
</feature>
<feature type="binding site" evidence="1">
    <location>
        <position position="162"/>
    </location>
    <ligand>
        <name>UDP-N-acetyl-alpha-D-glucosamine</name>
        <dbReference type="ChEBI" id="CHEBI:57705"/>
    </ligand>
</feature>
<feature type="binding site" evidence="1">
    <location>
        <position position="190"/>
    </location>
    <ligand>
        <name>UDP-N-acetyl-alpha-D-glucosamine</name>
        <dbReference type="ChEBI" id="CHEBI:57705"/>
    </ligand>
</feature>
<feature type="binding site" evidence="1">
    <location>
        <position position="243"/>
    </location>
    <ligand>
        <name>UDP-N-acetyl-alpha-D-glucosamine</name>
        <dbReference type="ChEBI" id="CHEBI:57705"/>
    </ligand>
</feature>
<feature type="binding site" evidence="1">
    <location>
        <begin position="262"/>
        <end position="267"/>
    </location>
    <ligand>
        <name>UDP-N-acetyl-alpha-D-glucosamine</name>
        <dbReference type="ChEBI" id="CHEBI:57705"/>
    </ligand>
</feature>
<feature type="binding site" evidence="1">
    <location>
        <position position="287"/>
    </location>
    <ligand>
        <name>UDP-N-acetyl-alpha-D-glucosamine</name>
        <dbReference type="ChEBI" id="CHEBI:57705"/>
    </ligand>
</feature>
<gene>
    <name evidence="1" type="primary">murG</name>
    <name type="ordered locus">VIBHAR_00902</name>
</gene>
<accession>A7MXR6</accession>
<sequence>MKKNKRLMVMAGGTGGHVFPGLAVAKQLQEQGWEIRWLGTADRMEADLVPKHGIEIDFIKVKGLRGQGVKRLLAAPFQIINAIMQARAHMKRWQPDAVLGMGGYVSGPGGIAAWMSGIPVVLHEQNAVAGLTNQWLSKIAKKVFQAFPGAFPNAEVVGNPVREDVTQLAAPTERMQERQGPIRILVMGGSQGARILNQTLPEVMAKLGDDYSIRHQAGKGSAEEVNAAYQANGVANADVTEFIHDVAEAYAWADLLVCRSGALTVSEVSAAGVGAIFVPFMHKDRQQALNADHLVDCGAAKMIEQPDLTVESLTQQIQQLDRQALLTMAEQARGAAKLNADRVVAQAIVALTEKR</sequence>